<organism>
    <name type="scientific">Pseudomonas putida (strain GB-1)</name>
    <dbReference type="NCBI Taxonomy" id="76869"/>
    <lineage>
        <taxon>Bacteria</taxon>
        <taxon>Pseudomonadati</taxon>
        <taxon>Pseudomonadota</taxon>
        <taxon>Gammaproteobacteria</taxon>
        <taxon>Pseudomonadales</taxon>
        <taxon>Pseudomonadaceae</taxon>
        <taxon>Pseudomonas</taxon>
    </lineage>
</organism>
<sequence length="396" mass="42779">MSEYSLFTSESVSEGHPDKIADQISDAVLDAIIAQDKYARVACETLVKTGVAIIAGEVTTSAWVDLEDLVRKVIIDIGYNSSDVGFDGATCAVMNIIGKQSVDIAQGVDRSKPEDQGAGDQGLMFGYASNETEVLMPAPICFSHRLVERQAEARKSGLLPWLRPDAKSQVTCRYENGKVVGIDAVVLSTQHNPEVSQKDLQEAVMELIVKHTLPAELLHKGTQYHINPTGNFIIGGPVGDCGLTGRKIIVDSYGGMARHGGGAFSGKDPSKVDRSAAYAGRYVAKNIVAAGLAERCEIQVSYAIGVAQPTSISINTFGTGKVSDDKIIQLVRECFDLRPYAITTMLDLLHPMYQETAAYGHFGRTPQQKTVGDDTFTTFTWERTDRAQSLRDAAGL</sequence>
<accession>B0KLZ1</accession>
<keyword id="KW-0067">ATP-binding</keyword>
<keyword id="KW-0963">Cytoplasm</keyword>
<keyword id="KW-0460">Magnesium</keyword>
<keyword id="KW-0479">Metal-binding</keyword>
<keyword id="KW-0547">Nucleotide-binding</keyword>
<keyword id="KW-0554">One-carbon metabolism</keyword>
<keyword id="KW-0630">Potassium</keyword>
<keyword id="KW-0808">Transferase</keyword>
<feature type="chain" id="PRO_1000075387" description="S-adenosylmethionine synthase">
    <location>
        <begin position="1"/>
        <end position="396"/>
    </location>
</feature>
<feature type="region of interest" description="Flexible loop" evidence="1">
    <location>
        <begin position="100"/>
        <end position="110"/>
    </location>
</feature>
<feature type="binding site" description="in other chain" evidence="1">
    <location>
        <position position="16"/>
    </location>
    <ligand>
        <name>ATP</name>
        <dbReference type="ChEBI" id="CHEBI:30616"/>
        <note>ligand shared between two neighboring subunits</note>
    </ligand>
</feature>
<feature type="binding site" evidence="1">
    <location>
        <position position="18"/>
    </location>
    <ligand>
        <name>Mg(2+)</name>
        <dbReference type="ChEBI" id="CHEBI:18420"/>
    </ligand>
</feature>
<feature type="binding site" evidence="1">
    <location>
        <position position="44"/>
    </location>
    <ligand>
        <name>K(+)</name>
        <dbReference type="ChEBI" id="CHEBI:29103"/>
    </ligand>
</feature>
<feature type="binding site" description="in other chain" evidence="1">
    <location>
        <position position="57"/>
    </location>
    <ligand>
        <name>L-methionine</name>
        <dbReference type="ChEBI" id="CHEBI:57844"/>
        <note>ligand shared between two neighboring subunits</note>
    </ligand>
</feature>
<feature type="binding site" description="in other chain" evidence="1">
    <location>
        <position position="100"/>
    </location>
    <ligand>
        <name>L-methionine</name>
        <dbReference type="ChEBI" id="CHEBI:57844"/>
        <note>ligand shared between two neighboring subunits</note>
    </ligand>
</feature>
<feature type="binding site" description="in other chain" evidence="1">
    <location>
        <begin position="165"/>
        <end position="167"/>
    </location>
    <ligand>
        <name>ATP</name>
        <dbReference type="ChEBI" id="CHEBI:30616"/>
        <note>ligand shared between two neighboring subunits</note>
    </ligand>
</feature>
<feature type="binding site" evidence="1">
    <location>
        <position position="240"/>
    </location>
    <ligand>
        <name>ATP</name>
        <dbReference type="ChEBI" id="CHEBI:30616"/>
        <note>ligand shared between two neighboring subunits</note>
    </ligand>
</feature>
<feature type="binding site" evidence="1">
    <location>
        <position position="240"/>
    </location>
    <ligand>
        <name>L-methionine</name>
        <dbReference type="ChEBI" id="CHEBI:57844"/>
        <note>ligand shared between two neighboring subunits</note>
    </ligand>
</feature>
<feature type="binding site" description="in other chain" evidence="1">
    <location>
        <begin position="246"/>
        <end position="247"/>
    </location>
    <ligand>
        <name>ATP</name>
        <dbReference type="ChEBI" id="CHEBI:30616"/>
        <note>ligand shared between two neighboring subunits</note>
    </ligand>
</feature>
<feature type="binding site" evidence="1">
    <location>
        <position position="263"/>
    </location>
    <ligand>
        <name>ATP</name>
        <dbReference type="ChEBI" id="CHEBI:30616"/>
        <note>ligand shared between two neighboring subunits</note>
    </ligand>
</feature>
<feature type="binding site" evidence="1">
    <location>
        <position position="267"/>
    </location>
    <ligand>
        <name>ATP</name>
        <dbReference type="ChEBI" id="CHEBI:30616"/>
        <note>ligand shared between two neighboring subunits</note>
    </ligand>
</feature>
<feature type="binding site" description="in other chain" evidence="1">
    <location>
        <position position="271"/>
    </location>
    <ligand>
        <name>L-methionine</name>
        <dbReference type="ChEBI" id="CHEBI:57844"/>
        <note>ligand shared between two neighboring subunits</note>
    </ligand>
</feature>
<comment type="function">
    <text evidence="1">Catalyzes the formation of S-adenosylmethionine (AdoMet) from methionine and ATP. The overall synthetic reaction is composed of two sequential steps, AdoMet formation and the subsequent tripolyphosphate hydrolysis which occurs prior to release of AdoMet from the enzyme.</text>
</comment>
<comment type="catalytic activity">
    <reaction evidence="1">
        <text>L-methionine + ATP + H2O = S-adenosyl-L-methionine + phosphate + diphosphate</text>
        <dbReference type="Rhea" id="RHEA:21080"/>
        <dbReference type="ChEBI" id="CHEBI:15377"/>
        <dbReference type="ChEBI" id="CHEBI:30616"/>
        <dbReference type="ChEBI" id="CHEBI:33019"/>
        <dbReference type="ChEBI" id="CHEBI:43474"/>
        <dbReference type="ChEBI" id="CHEBI:57844"/>
        <dbReference type="ChEBI" id="CHEBI:59789"/>
        <dbReference type="EC" id="2.5.1.6"/>
    </reaction>
</comment>
<comment type="cofactor">
    <cofactor evidence="1">
        <name>Mg(2+)</name>
        <dbReference type="ChEBI" id="CHEBI:18420"/>
    </cofactor>
    <text evidence="1">Binds 2 divalent ions per subunit.</text>
</comment>
<comment type="cofactor">
    <cofactor evidence="1">
        <name>K(+)</name>
        <dbReference type="ChEBI" id="CHEBI:29103"/>
    </cofactor>
    <text evidence="1">Binds 1 potassium ion per subunit.</text>
</comment>
<comment type="pathway">
    <text evidence="1">Amino-acid biosynthesis; S-adenosyl-L-methionine biosynthesis; S-adenosyl-L-methionine from L-methionine: step 1/1.</text>
</comment>
<comment type="subunit">
    <text evidence="1">Homotetramer; dimer of dimers.</text>
</comment>
<comment type="subcellular location">
    <subcellularLocation>
        <location evidence="1">Cytoplasm</location>
    </subcellularLocation>
</comment>
<comment type="similarity">
    <text evidence="1">Belongs to the AdoMet synthase family.</text>
</comment>
<name>METK_PSEPG</name>
<proteinExistence type="inferred from homology"/>
<dbReference type="EC" id="2.5.1.6" evidence="1"/>
<dbReference type="EMBL" id="CP000926">
    <property type="protein sequence ID" value="ABZ00901.1"/>
    <property type="molecule type" value="Genomic_DNA"/>
</dbReference>
<dbReference type="RefSeq" id="WP_003249375.1">
    <property type="nucleotide sequence ID" value="NC_010322.1"/>
</dbReference>
<dbReference type="SMR" id="B0KLZ1"/>
<dbReference type="GeneID" id="83682701"/>
<dbReference type="KEGG" id="ppg:PputGB1_5016"/>
<dbReference type="eggNOG" id="COG0192">
    <property type="taxonomic scope" value="Bacteria"/>
</dbReference>
<dbReference type="HOGENOM" id="CLU_041802_1_1_6"/>
<dbReference type="UniPathway" id="UPA00315">
    <property type="reaction ID" value="UER00080"/>
</dbReference>
<dbReference type="Proteomes" id="UP000002157">
    <property type="component" value="Chromosome"/>
</dbReference>
<dbReference type="GO" id="GO:0005737">
    <property type="term" value="C:cytoplasm"/>
    <property type="evidence" value="ECO:0007669"/>
    <property type="project" value="UniProtKB-SubCell"/>
</dbReference>
<dbReference type="GO" id="GO:0005524">
    <property type="term" value="F:ATP binding"/>
    <property type="evidence" value="ECO:0007669"/>
    <property type="project" value="UniProtKB-UniRule"/>
</dbReference>
<dbReference type="GO" id="GO:0000287">
    <property type="term" value="F:magnesium ion binding"/>
    <property type="evidence" value="ECO:0007669"/>
    <property type="project" value="UniProtKB-UniRule"/>
</dbReference>
<dbReference type="GO" id="GO:0004478">
    <property type="term" value="F:methionine adenosyltransferase activity"/>
    <property type="evidence" value="ECO:0007669"/>
    <property type="project" value="UniProtKB-UniRule"/>
</dbReference>
<dbReference type="GO" id="GO:0006730">
    <property type="term" value="P:one-carbon metabolic process"/>
    <property type="evidence" value="ECO:0007669"/>
    <property type="project" value="UniProtKB-KW"/>
</dbReference>
<dbReference type="GO" id="GO:0006556">
    <property type="term" value="P:S-adenosylmethionine biosynthetic process"/>
    <property type="evidence" value="ECO:0007669"/>
    <property type="project" value="UniProtKB-UniRule"/>
</dbReference>
<dbReference type="CDD" id="cd18079">
    <property type="entry name" value="S-AdoMet_synt"/>
    <property type="match status" value="1"/>
</dbReference>
<dbReference type="FunFam" id="3.30.300.10:FF:000003">
    <property type="entry name" value="S-adenosylmethionine synthase"/>
    <property type="match status" value="1"/>
</dbReference>
<dbReference type="Gene3D" id="3.30.300.10">
    <property type="match status" value="3"/>
</dbReference>
<dbReference type="HAMAP" id="MF_00086">
    <property type="entry name" value="S_AdoMet_synth1"/>
    <property type="match status" value="1"/>
</dbReference>
<dbReference type="InterPro" id="IPR022631">
    <property type="entry name" value="ADOMET_SYNTHASE_CS"/>
</dbReference>
<dbReference type="InterPro" id="IPR022630">
    <property type="entry name" value="S-AdoMet_synt_C"/>
</dbReference>
<dbReference type="InterPro" id="IPR022629">
    <property type="entry name" value="S-AdoMet_synt_central"/>
</dbReference>
<dbReference type="InterPro" id="IPR022628">
    <property type="entry name" value="S-AdoMet_synt_N"/>
</dbReference>
<dbReference type="InterPro" id="IPR002133">
    <property type="entry name" value="S-AdoMet_synthetase"/>
</dbReference>
<dbReference type="InterPro" id="IPR022636">
    <property type="entry name" value="S-AdoMet_synthetase_sfam"/>
</dbReference>
<dbReference type="NCBIfam" id="TIGR01034">
    <property type="entry name" value="metK"/>
    <property type="match status" value="1"/>
</dbReference>
<dbReference type="PANTHER" id="PTHR11964">
    <property type="entry name" value="S-ADENOSYLMETHIONINE SYNTHETASE"/>
    <property type="match status" value="1"/>
</dbReference>
<dbReference type="Pfam" id="PF02773">
    <property type="entry name" value="S-AdoMet_synt_C"/>
    <property type="match status" value="1"/>
</dbReference>
<dbReference type="Pfam" id="PF02772">
    <property type="entry name" value="S-AdoMet_synt_M"/>
    <property type="match status" value="1"/>
</dbReference>
<dbReference type="Pfam" id="PF00438">
    <property type="entry name" value="S-AdoMet_synt_N"/>
    <property type="match status" value="1"/>
</dbReference>
<dbReference type="PIRSF" id="PIRSF000497">
    <property type="entry name" value="MAT"/>
    <property type="match status" value="1"/>
</dbReference>
<dbReference type="SUPFAM" id="SSF55973">
    <property type="entry name" value="S-adenosylmethionine synthetase"/>
    <property type="match status" value="3"/>
</dbReference>
<dbReference type="PROSITE" id="PS00376">
    <property type="entry name" value="ADOMET_SYNTHASE_1"/>
    <property type="match status" value="1"/>
</dbReference>
<dbReference type="PROSITE" id="PS00377">
    <property type="entry name" value="ADOMET_SYNTHASE_2"/>
    <property type="match status" value="1"/>
</dbReference>
<reference key="1">
    <citation type="submission" date="2008-01" db="EMBL/GenBank/DDBJ databases">
        <title>Complete sequence of Pseudomonas putida GB-1.</title>
        <authorList>
            <consortium name="US DOE Joint Genome Institute"/>
            <person name="Copeland A."/>
            <person name="Lucas S."/>
            <person name="Lapidus A."/>
            <person name="Barry K."/>
            <person name="Glavina del Rio T."/>
            <person name="Dalin E."/>
            <person name="Tice H."/>
            <person name="Pitluck S."/>
            <person name="Bruce D."/>
            <person name="Goodwin L."/>
            <person name="Chertkov O."/>
            <person name="Brettin T."/>
            <person name="Detter J.C."/>
            <person name="Han C."/>
            <person name="Kuske C.R."/>
            <person name="Schmutz J."/>
            <person name="Larimer F."/>
            <person name="Land M."/>
            <person name="Hauser L."/>
            <person name="Kyrpides N."/>
            <person name="Kim E."/>
            <person name="McCarthy J.K."/>
            <person name="Richardson P."/>
        </authorList>
    </citation>
    <scope>NUCLEOTIDE SEQUENCE [LARGE SCALE GENOMIC DNA]</scope>
    <source>
        <strain>GB-1</strain>
    </source>
</reference>
<gene>
    <name evidence="1" type="primary">metK</name>
    <name type="ordered locus">PputGB1_5016</name>
</gene>
<protein>
    <recommendedName>
        <fullName evidence="1">S-adenosylmethionine synthase</fullName>
        <shortName evidence="1">AdoMet synthase</shortName>
        <ecNumber evidence="1">2.5.1.6</ecNumber>
    </recommendedName>
    <alternativeName>
        <fullName evidence="1">MAT</fullName>
    </alternativeName>
    <alternativeName>
        <fullName evidence="1">Methionine adenosyltransferase</fullName>
    </alternativeName>
</protein>
<evidence type="ECO:0000255" key="1">
    <source>
        <dbReference type="HAMAP-Rule" id="MF_00086"/>
    </source>
</evidence>